<organism>
    <name type="scientific">Daboia russelii</name>
    <name type="common">Russel's viper</name>
    <name type="synonym">Vipera russelii</name>
    <dbReference type="NCBI Taxonomy" id="8707"/>
    <lineage>
        <taxon>Eukaryota</taxon>
        <taxon>Metazoa</taxon>
        <taxon>Chordata</taxon>
        <taxon>Craniata</taxon>
        <taxon>Vertebrata</taxon>
        <taxon>Euteleostomi</taxon>
        <taxon>Lepidosauria</taxon>
        <taxon>Squamata</taxon>
        <taxon>Bifurcata</taxon>
        <taxon>Unidentata</taxon>
        <taxon>Episquamata</taxon>
        <taxon>Toxicofera</taxon>
        <taxon>Serpentes</taxon>
        <taxon>Colubroidea</taxon>
        <taxon>Viperidae</taxon>
        <taxon>Viperinae</taxon>
        <taxon>Daboia</taxon>
    </lineage>
</organism>
<accession>P30894</accession>
<evidence type="ECO:0000250" key="1">
    <source>
        <dbReference type="UniProtKB" id="P61898"/>
    </source>
</evidence>
<evidence type="ECO:0000250" key="2">
    <source>
        <dbReference type="UniProtKB" id="P61899"/>
    </source>
</evidence>
<evidence type="ECO:0000269" key="3">
    <source>
    </source>
</evidence>
<evidence type="ECO:0000269" key="4">
    <source>
    </source>
</evidence>
<evidence type="ECO:0000305" key="5"/>
<evidence type="ECO:0000305" key="6">
    <source>
    </source>
</evidence>
<proteinExistence type="evidence at protein level"/>
<keyword id="KW-0903">Direct protein sequencing</keyword>
<keyword id="KW-1015">Disulfide bond</keyword>
<keyword id="KW-0325">Glycoprotein</keyword>
<keyword id="KW-0339">Growth factor</keyword>
<keyword id="KW-0446">Lipid-binding</keyword>
<keyword id="KW-0481">Metalloenzyme inhibitor</keyword>
<keyword id="KW-0483">Metalloprotease inhibitor</keyword>
<keyword id="KW-0646">Protease inhibitor</keyword>
<keyword id="KW-0964">Secreted</keyword>
<keyword id="KW-0800">Toxin</keyword>
<name>NGFV_DABRR</name>
<sequence>HPVHNQGEFSVCDSVSVWVANKTTATDMRGNVVTVMVDVNLNNNVYKQYFFETKCKNPNPVPSGCRGIDAKHWNSYCTTTDTFVRALTMERNQASWRFIRINTACVCVISRKNDNFG</sequence>
<dbReference type="SMR" id="P30894"/>
<dbReference type="iPTMnet" id="P30894"/>
<dbReference type="GO" id="GO:0030424">
    <property type="term" value="C:axon"/>
    <property type="evidence" value="ECO:0007669"/>
    <property type="project" value="TreeGrafter"/>
</dbReference>
<dbReference type="GO" id="GO:0030425">
    <property type="term" value="C:dendrite"/>
    <property type="evidence" value="ECO:0007669"/>
    <property type="project" value="TreeGrafter"/>
</dbReference>
<dbReference type="GO" id="GO:0005615">
    <property type="term" value="C:extracellular space"/>
    <property type="evidence" value="ECO:0007669"/>
    <property type="project" value="TreeGrafter"/>
</dbReference>
<dbReference type="GO" id="GO:0008021">
    <property type="term" value="C:synaptic vesicle"/>
    <property type="evidence" value="ECO:0007669"/>
    <property type="project" value="TreeGrafter"/>
</dbReference>
<dbReference type="GO" id="GO:0008083">
    <property type="term" value="F:growth factor activity"/>
    <property type="evidence" value="ECO:0007669"/>
    <property type="project" value="UniProtKB-KW"/>
</dbReference>
<dbReference type="GO" id="GO:0008289">
    <property type="term" value="F:lipid binding"/>
    <property type="evidence" value="ECO:0007669"/>
    <property type="project" value="UniProtKB-KW"/>
</dbReference>
<dbReference type="GO" id="GO:0008191">
    <property type="term" value="F:metalloendopeptidase inhibitor activity"/>
    <property type="evidence" value="ECO:0000250"/>
    <property type="project" value="UniProtKB"/>
</dbReference>
<dbReference type="GO" id="GO:0005163">
    <property type="term" value="F:nerve growth factor receptor binding"/>
    <property type="evidence" value="ECO:0007669"/>
    <property type="project" value="TreeGrafter"/>
</dbReference>
<dbReference type="GO" id="GO:0090729">
    <property type="term" value="F:toxin activity"/>
    <property type="evidence" value="ECO:0007669"/>
    <property type="project" value="UniProtKB-KW"/>
</dbReference>
<dbReference type="GO" id="GO:0007169">
    <property type="term" value="P:cell surface receptor protein tyrosine kinase signaling pathway"/>
    <property type="evidence" value="ECO:0007669"/>
    <property type="project" value="TreeGrafter"/>
</dbReference>
<dbReference type="GO" id="GO:0050804">
    <property type="term" value="P:modulation of chemical synaptic transmission"/>
    <property type="evidence" value="ECO:0007669"/>
    <property type="project" value="TreeGrafter"/>
</dbReference>
<dbReference type="GO" id="GO:0043524">
    <property type="term" value="P:negative regulation of neuron apoptotic process"/>
    <property type="evidence" value="ECO:0007669"/>
    <property type="project" value="TreeGrafter"/>
</dbReference>
<dbReference type="GO" id="GO:0021675">
    <property type="term" value="P:nerve development"/>
    <property type="evidence" value="ECO:0007669"/>
    <property type="project" value="TreeGrafter"/>
</dbReference>
<dbReference type="GO" id="GO:0038180">
    <property type="term" value="P:nerve growth factor signaling pathway"/>
    <property type="evidence" value="ECO:0007669"/>
    <property type="project" value="TreeGrafter"/>
</dbReference>
<dbReference type="GO" id="GO:0048812">
    <property type="term" value="P:neuron projection morphogenesis"/>
    <property type="evidence" value="ECO:0007669"/>
    <property type="project" value="TreeGrafter"/>
</dbReference>
<dbReference type="FunFam" id="2.10.90.10:FF:000002">
    <property type="entry name" value="Brain-derived neurotrophic factor"/>
    <property type="match status" value="1"/>
</dbReference>
<dbReference type="Gene3D" id="2.10.90.10">
    <property type="entry name" value="Cystine-knot cytokines"/>
    <property type="match status" value="1"/>
</dbReference>
<dbReference type="InterPro" id="IPR029034">
    <property type="entry name" value="Cystine-knot_cytokine"/>
</dbReference>
<dbReference type="InterPro" id="IPR020408">
    <property type="entry name" value="Nerve_growth_factor-like"/>
</dbReference>
<dbReference type="InterPro" id="IPR002072">
    <property type="entry name" value="Nerve_growth_factor-rel"/>
</dbReference>
<dbReference type="InterPro" id="IPR020425">
    <property type="entry name" value="Nerve_growth_factor_bsu"/>
</dbReference>
<dbReference type="InterPro" id="IPR019846">
    <property type="entry name" value="Nerve_growth_factor_CS"/>
</dbReference>
<dbReference type="PANTHER" id="PTHR11589:SF10">
    <property type="entry name" value="BETA-NERVE GROWTH FACTOR"/>
    <property type="match status" value="1"/>
</dbReference>
<dbReference type="PANTHER" id="PTHR11589">
    <property type="entry name" value="NERVE GROWTH FACTOR NGF -RELATED"/>
    <property type="match status" value="1"/>
</dbReference>
<dbReference type="Pfam" id="PF00243">
    <property type="entry name" value="NGF"/>
    <property type="match status" value="1"/>
</dbReference>
<dbReference type="PRINTS" id="PR00268">
    <property type="entry name" value="NGF"/>
</dbReference>
<dbReference type="PRINTS" id="PR01913">
    <property type="entry name" value="NGFBETA"/>
</dbReference>
<dbReference type="SMART" id="SM00140">
    <property type="entry name" value="NGF"/>
    <property type="match status" value="1"/>
</dbReference>
<dbReference type="SUPFAM" id="SSF57501">
    <property type="entry name" value="Cystine-knot cytokines"/>
    <property type="match status" value="1"/>
</dbReference>
<dbReference type="PROSITE" id="PS00248">
    <property type="entry name" value="NGF_1"/>
    <property type="match status" value="1"/>
</dbReference>
<dbReference type="PROSITE" id="PS50270">
    <property type="entry name" value="NGF_2"/>
    <property type="match status" value="1"/>
</dbReference>
<protein>
    <recommendedName>
        <fullName>Venom nerve growth factor</fullName>
        <shortName>v-NGF</shortName>
        <shortName>vNGF</shortName>
    </recommendedName>
</protein>
<feature type="chain" id="PRO_0000159604" description="Venom nerve growth factor">
    <location>
        <begin position="1"/>
        <end position="117"/>
    </location>
</feature>
<feature type="glycosylation site" description="N-linked (GlcNAc...) asparagine" evidence="3">
    <location>
        <position position="21"/>
    </location>
</feature>
<feature type="disulfide bond" evidence="1">
    <location>
        <begin position="12"/>
        <end position="77"/>
    </location>
</feature>
<feature type="disulfide bond" evidence="1">
    <location>
        <begin position="55"/>
        <end position="105"/>
    </location>
</feature>
<feature type="disulfide bond" evidence="1">
    <location>
        <begin position="65"/>
        <end position="107"/>
    </location>
</feature>
<comment type="function">
    <text evidence="1 2">Nerve growth factor is important for the development and maintenance of the sympathetic and sensory nervous systems. It stimulates division and differentiation of sympathetic and embryonic sensory neurons as well as basal forebrain cholinergic neurons in the brain. Its relevance in the snake venom is not clear. However, it has been shown to inhibit metalloproteinase-dependent proteolysis of platelet glycoprotein Ib alpha, suggesting a metalloproteinase inhibition to prevent metalloprotease autodigestion and/or protection against prey proteases (By similarity). Binds a lipid between the two protein chains in the homodimer. The lipid-bound form promotes histamine relase from mouse mast cells, contrary to the lipid-free form (By similarity).</text>
</comment>
<comment type="subunit">
    <text evidence="1">Homodimer; non-covalently linked.</text>
</comment>
<comment type="subcellular location">
    <subcellularLocation>
        <location evidence="4">Secreted</location>
    </subcellularLocation>
</comment>
<comment type="tissue specificity">
    <text evidence="6">Expressed by the venom gland.</text>
</comment>
<comment type="similarity">
    <text evidence="5">Belongs to the NGF-beta family.</text>
</comment>
<reference key="1">
    <citation type="journal article" date="1992" name="Biochim. Biophys. Acta">
        <title>Purification and amino-acid sequence of a nerve growth factor from the venom of Vipera russelli russelli.</title>
        <authorList>
            <person name="Koyama J."/>
            <person name="Inoue S."/>
            <person name="Ikeda K."/>
            <person name="Hayashi K."/>
        </authorList>
    </citation>
    <scope>PROTEIN SEQUENCE</scope>
    <scope>GLYCOSYLATION AT ASN-21</scope>
    <source>
        <tissue>Venom</tissue>
    </source>
</reference>
<reference key="2">
    <citation type="journal article" date="2011" name="Toxicon">
        <title>Molecular diversity of snake venom nerve growth factors.</title>
        <authorList>
            <person name="Trummal K."/>
            <person name="Tonismagi K."/>
            <person name="Paalme V."/>
            <person name="Jarvekulg L."/>
            <person name="Siigur J."/>
            <person name="Siigur E."/>
        </authorList>
    </citation>
    <scope>CHARACTERIZATION</scope>
    <scope>GLYCOSYLATION</scope>
    <source>
        <tissue>Venom</tissue>
    </source>
</reference>